<comment type="catalytic activity">
    <reaction evidence="1">
        <text>tRNA(Gly) + glycine + ATP = glycyl-tRNA(Gly) + AMP + diphosphate</text>
        <dbReference type="Rhea" id="RHEA:16013"/>
        <dbReference type="Rhea" id="RHEA-COMP:9664"/>
        <dbReference type="Rhea" id="RHEA-COMP:9683"/>
        <dbReference type="ChEBI" id="CHEBI:30616"/>
        <dbReference type="ChEBI" id="CHEBI:33019"/>
        <dbReference type="ChEBI" id="CHEBI:57305"/>
        <dbReference type="ChEBI" id="CHEBI:78442"/>
        <dbReference type="ChEBI" id="CHEBI:78522"/>
        <dbReference type="ChEBI" id="CHEBI:456215"/>
        <dbReference type="EC" id="6.1.1.14"/>
    </reaction>
</comment>
<comment type="subunit">
    <text evidence="1">Tetramer of two alpha and two beta subunits.</text>
</comment>
<comment type="subcellular location">
    <subcellularLocation>
        <location evidence="1">Cytoplasm</location>
    </subcellularLocation>
</comment>
<comment type="similarity">
    <text evidence="1">Belongs to the class-II aminoacyl-tRNA synthetase family.</text>
</comment>
<sequence>MSEKTFLVEIGTEELPPKALRSLAESFAANVTAELDNAGLAHGNVEWFAAPRRLALKVANLAASQPDREVEKRGPAIAQAFDAEGKPSKAAEGWARGCGITVDQAERLTTDKGEWLLYRAHVKGESAEALLPNMIATSLAKLPIPKLMRWGASDVHFVRPVHTVTLLLGDKLIPATILGIQSDRVIRGHRFMGEPEITIDTADQYPQILLERGKVVADYEARKAKIKADAEEAARQIGGNADLSESLLEEVTSLVEWPVVLTAKFEEKFLAVPSEALVYTMKGDQKYFPVYAADGKLLPNFIFVANIESKDPQQIISGNEKVVRPRLADAEFFFNTDRKKRLEDNLPRLQTVLFQQQLGTLRDKTDRIQALAGWIAEQIGADVNHATRAGLLSKCDLMTNMVFEFTDTQGVMGMHYARHDGEAEDVAVALNEQYQPRFAGDDLPSNPVACALAIADKMDTLAGIFGIGQHPKGDKDPFALRRAALGVLRIIVEKNLNLDLKTLTEEAARLYGDKLTNANVVDDVIDFMLGRFRAWYQDEGYTVDTIQAVLARRPTRPADFDARMKAVSHFRTLEEASALAAANKRVSNILAKSDEVLNDRVNAATLKEPEEIALALQVVVLRDKLEPVFAEGRYQEALVELAELREPVDTFFEKVMVMVDDKDLRINRLSMLAKLRELFLQVADISLLQ</sequence>
<organism>
    <name type="scientific">Citrobacter koseri (strain ATCC BAA-895 / CDC 4225-83 / SGSC4696)</name>
    <dbReference type="NCBI Taxonomy" id="290338"/>
    <lineage>
        <taxon>Bacteria</taxon>
        <taxon>Pseudomonadati</taxon>
        <taxon>Pseudomonadota</taxon>
        <taxon>Gammaproteobacteria</taxon>
        <taxon>Enterobacterales</taxon>
        <taxon>Enterobacteriaceae</taxon>
        <taxon>Citrobacter</taxon>
    </lineage>
</organism>
<gene>
    <name evidence="1" type="primary">glyS</name>
    <name type="ordered locus">CKO_05015</name>
</gene>
<accession>A8ARE4</accession>
<dbReference type="EC" id="6.1.1.14" evidence="1"/>
<dbReference type="EMBL" id="CP000822">
    <property type="protein sequence ID" value="ABV16058.1"/>
    <property type="molecule type" value="Genomic_DNA"/>
</dbReference>
<dbReference type="RefSeq" id="WP_012135696.1">
    <property type="nucleotide sequence ID" value="NC_009792.1"/>
</dbReference>
<dbReference type="SMR" id="A8ARE4"/>
<dbReference type="STRING" id="290338.CKO_05015"/>
<dbReference type="GeneID" id="45138479"/>
<dbReference type="KEGG" id="cko:CKO_05015"/>
<dbReference type="HOGENOM" id="CLU_007220_2_2_6"/>
<dbReference type="OrthoDB" id="9775440at2"/>
<dbReference type="Proteomes" id="UP000008148">
    <property type="component" value="Chromosome"/>
</dbReference>
<dbReference type="GO" id="GO:0005829">
    <property type="term" value="C:cytosol"/>
    <property type="evidence" value="ECO:0007669"/>
    <property type="project" value="TreeGrafter"/>
</dbReference>
<dbReference type="GO" id="GO:0004814">
    <property type="term" value="F:arginine-tRNA ligase activity"/>
    <property type="evidence" value="ECO:0007669"/>
    <property type="project" value="InterPro"/>
</dbReference>
<dbReference type="GO" id="GO:0005524">
    <property type="term" value="F:ATP binding"/>
    <property type="evidence" value="ECO:0007669"/>
    <property type="project" value="UniProtKB-UniRule"/>
</dbReference>
<dbReference type="GO" id="GO:0004820">
    <property type="term" value="F:glycine-tRNA ligase activity"/>
    <property type="evidence" value="ECO:0007669"/>
    <property type="project" value="UniProtKB-UniRule"/>
</dbReference>
<dbReference type="GO" id="GO:0006420">
    <property type="term" value="P:arginyl-tRNA aminoacylation"/>
    <property type="evidence" value="ECO:0007669"/>
    <property type="project" value="InterPro"/>
</dbReference>
<dbReference type="GO" id="GO:0006426">
    <property type="term" value="P:glycyl-tRNA aminoacylation"/>
    <property type="evidence" value="ECO:0007669"/>
    <property type="project" value="UniProtKB-UniRule"/>
</dbReference>
<dbReference type="HAMAP" id="MF_00255">
    <property type="entry name" value="Gly_tRNA_synth_beta"/>
    <property type="match status" value="1"/>
</dbReference>
<dbReference type="InterPro" id="IPR008909">
    <property type="entry name" value="DALR_anticod-bd"/>
</dbReference>
<dbReference type="InterPro" id="IPR015944">
    <property type="entry name" value="Gly-tRNA-synth_bsu"/>
</dbReference>
<dbReference type="InterPro" id="IPR006194">
    <property type="entry name" value="Gly-tRNA-synth_heterodimer"/>
</dbReference>
<dbReference type="NCBIfam" id="TIGR00211">
    <property type="entry name" value="glyS"/>
    <property type="match status" value="1"/>
</dbReference>
<dbReference type="PANTHER" id="PTHR30075:SF2">
    <property type="entry name" value="GLYCINE--TRNA LIGASE, CHLOROPLASTIC_MITOCHONDRIAL 2"/>
    <property type="match status" value="1"/>
</dbReference>
<dbReference type="PANTHER" id="PTHR30075">
    <property type="entry name" value="GLYCYL-TRNA SYNTHETASE"/>
    <property type="match status" value="1"/>
</dbReference>
<dbReference type="Pfam" id="PF05746">
    <property type="entry name" value="DALR_1"/>
    <property type="match status" value="1"/>
</dbReference>
<dbReference type="Pfam" id="PF02092">
    <property type="entry name" value="tRNA_synt_2f"/>
    <property type="match status" value="1"/>
</dbReference>
<dbReference type="PRINTS" id="PR01045">
    <property type="entry name" value="TRNASYNTHGB"/>
</dbReference>
<dbReference type="SUPFAM" id="SSF109604">
    <property type="entry name" value="HD-domain/PDEase-like"/>
    <property type="match status" value="1"/>
</dbReference>
<dbReference type="PROSITE" id="PS50861">
    <property type="entry name" value="AA_TRNA_LIGASE_II_GLYAB"/>
    <property type="match status" value="1"/>
</dbReference>
<reference key="1">
    <citation type="submission" date="2007-08" db="EMBL/GenBank/DDBJ databases">
        <authorList>
            <consortium name="The Citrobacter koseri Genome Sequencing Project"/>
            <person name="McClelland M."/>
            <person name="Sanderson E.K."/>
            <person name="Porwollik S."/>
            <person name="Spieth J."/>
            <person name="Clifton W.S."/>
            <person name="Latreille P."/>
            <person name="Courtney L."/>
            <person name="Wang C."/>
            <person name="Pepin K."/>
            <person name="Bhonagiri V."/>
            <person name="Nash W."/>
            <person name="Johnson M."/>
            <person name="Thiruvilangam P."/>
            <person name="Wilson R."/>
        </authorList>
    </citation>
    <scope>NUCLEOTIDE SEQUENCE [LARGE SCALE GENOMIC DNA]</scope>
    <source>
        <strain>ATCC BAA-895 / CDC 4225-83 / SGSC4696</strain>
    </source>
</reference>
<name>SYGB_CITK8</name>
<feature type="chain" id="PRO_1000006353" description="Glycine--tRNA ligase beta subunit">
    <location>
        <begin position="1"/>
        <end position="689"/>
    </location>
</feature>
<evidence type="ECO:0000255" key="1">
    <source>
        <dbReference type="HAMAP-Rule" id="MF_00255"/>
    </source>
</evidence>
<proteinExistence type="inferred from homology"/>
<protein>
    <recommendedName>
        <fullName evidence="1">Glycine--tRNA ligase beta subunit</fullName>
        <ecNumber evidence="1">6.1.1.14</ecNumber>
    </recommendedName>
    <alternativeName>
        <fullName evidence="1">Glycyl-tRNA synthetase beta subunit</fullName>
        <shortName evidence="1">GlyRS</shortName>
    </alternativeName>
</protein>
<keyword id="KW-0030">Aminoacyl-tRNA synthetase</keyword>
<keyword id="KW-0067">ATP-binding</keyword>
<keyword id="KW-0963">Cytoplasm</keyword>
<keyword id="KW-0436">Ligase</keyword>
<keyword id="KW-0547">Nucleotide-binding</keyword>
<keyword id="KW-0648">Protein biosynthesis</keyword>
<keyword id="KW-1185">Reference proteome</keyword>